<feature type="chain" id="PRO_0000138430" description="UvrABC system protein B">
    <location>
        <begin position="1"/>
        <end position="661"/>
    </location>
</feature>
<feature type="domain" description="Helicase ATP-binding" evidence="1">
    <location>
        <begin position="28"/>
        <end position="414"/>
    </location>
</feature>
<feature type="domain" description="Helicase C-terminal" evidence="1">
    <location>
        <begin position="432"/>
        <end position="598"/>
    </location>
</feature>
<feature type="domain" description="UVR" evidence="1">
    <location>
        <begin position="625"/>
        <end position="660"/>
    </location>
</feature>
<feature type="region of interest" description="Disordered" evidence="2">
    <location>
        <begin position="603"/>
        <end position="624"/>
    </location>
</feature>
<feature type="short sequence motif" description="Beta-hairpin">
    <location>
        <begin position="94"/>
        <end position="117"/>
    </location>
</feature>
<feature type="binding site" evidence="1">
    <location>
        <begin position="41"/>
        <end position="48"/>
    </location>
    <ligand>
        <name>ATP</name>
        <dbReference type="ChEBI" id="CHEBI:30616"/>
    </ligand>
</feature>
<organism>
    <name type="scientific">Staphylococcus epidermidis (strain ATCC 12228 / FDA PCI 1200)</name>
    <dbReference type="NCBI Taxonomy" id="176280"/>
    <lineage>
        <taxon>Bacteria</taxon>
        <taxon>Bacillati</taxon>
        <taxon>Bacillota</taxon>
        <taxon>Bacilli</taxon>
        <taxon>Bacillales</taxon>
        <taxon>Staphylococcaceae</taxon>
        <taxon>Staphylococcus</taxon>
    </lineage>
</organism>
<protein>
    <recommendedName>
        <fullName evidence="1">UvrABC system protein B</fullName>
        <shortName evidence="1">Protein UvrB</shortName>
    </recommendedName>
    <alternativeName>
        <fullName evidence="1">Excinuclease ABC subunit B</fullName>
    </alternativeName>
</protein>
<reference key="1">
    <citation type="journal article" date="2003" name="Mol. Microbiol.">
        <title>Genome-based analysis of virulence genes in a non-biofilm-forming Staphylococcus epidermidis strain (ATCC 12228).</title>
        <authorList>
            <person name="Zhang Y.-Q."/>
            <person name="Ren S.-X."/>
            <person name="Li H.-L."/>
            <person name="Wang Y.-X."/>
            <person name="Fu G."/>
            <person name="Yang J."/>
            <person name="Qin Z.-Q."/>
            <person name="Miao Y.-G."/>
            <person name="Wang W.-Y."/>
            <person name="Chen R.-S."/>
            <person name="Shen Y."/>
            <person name="Chen Z."/>
            <person name="Yuan Z.-H."/>
            <person name="Zhao G.-P."/>
            <person name="Qu D."/>
            <person name="Danchin A."/>
            <person name="Wen Y.-M."/>
        </authorList>
    </citation>
    <scope>NUCLEOTIDE SEQUENCE [LARGE SCALE GENOMIC DNA]</scope>
    <source>
        <strain>ATCC 12228 / FDA PCI 1200</strain>
    </source>
</reference>
<evidence type="ECO:0000255" key="1">
    <source>
        <dbReference type="HAMAP-Rule" id="MF_00204"/>
    </source>
</evidence>
<evidence type="ECO:0000256" key="2">
    <source>
        <dbReference type="SAM" id="MobiDB-lite"/>
    </source>
</evidence>
<accession>Q8CPZ0</accession>
<sequence>MVEHVPFKLKSEFEPQGDQPQAIQKIVDGVNERKRHQTLLGATGTGKTFTMSNVIKEVGKPTLIIAHNKTLAGQLYSEFKEFFPENRVEYFVSYYDYYQPEAYVPSTDTFIEKDASINDEIDQLRHSATSSLFERDDVIIIASVSCIYGLGNPEEYKNLVVSVRVGMEMERSELLRKLVDVQYSRNDIDFQRGTFRVRGDVVEIFPASREEMCIRVEFFGDEIDRIREVNYLTGEVIREREHFTIFPASHFVTREEKMKVAIERIEKELEERLKELRDENKLLEAQRLEQRTNYDLEMMREMGFCSGIENYSVHLTLRPLGSTPYTLLDYFGDDWLVMIDESHVTLPQIRGMYNGDRARKQVLIDHGFRLPSALDNRPLKFEEFEEKTKQLVYVSATPGPYELEHTDEMVEQIIRPTGLLDPKIDVRPTENQIDDLLSEIQDRVDKDERVLVTTLTKKMSEDLTTYMKEAGIKVNYLHSEIKTLERIEIIRDLRMGTYDAIVGINLLREGIDIPEVSLVVILDADKEGFLRSDRSLIQTIGRAARNDKGEVIMYADKITDSMQYAIDETQRRREIQIAHNKEHGITPKTINKKIHDVISATVESDETNQQQQTELPKKMTKKERQKTIENIEKEMKKAAKDLDFEKATELRDMLFELKAEG</sequence>
<dbReference type="EMBL" id="AE015929">
    <property type="protein sequence ID" value="AAO04138.1"/>
    <property type="molecule type" value="Genomic_DNA"/>
</dbReference>
<dbReference type="RefSeq" id="NP_764096.1">
    <property type="nucleotide sequence ID" value="NC_004461.1"/>
</dbReference>
<dbReference type="RefSeq" id="WP_001829601.1">
    <property type="nucleotide sequence ID" value="NZ_WBME01000015.1"/>
</dbReference>
<dbReference type="SMR" id="Q8CPZ0"/>
<dbReference type="GeneID" id="50019312"/>
<dbReference type="KEGG" id="sep:SE_0541"/>
<dbReference type="PATRIC" id="fig|176280.10.peg.512"/>
<dbReference type="eggNOG" id="COG0556">
    <property type="taxonomic scope" value="Bacteria"/>
</dbReference>
<dbReference type="HOGENOM" id="CLU_009621_2_1_9"/>
<dbReference type="OrthoDB" id="9806651at2"/>
<dbReference type="Proteomes" id="UP000001411">
    <property type="component" value="Chromosome"/>
</dbReference>
<dbReference type="GO" id="GO:0005737">
    <property type="term" value="C:cytoplasm"/>
    <property type="evidence" value="ECO:0007669"/>
    <property type="project" value="UniProtKB-SubCell"/>
</dbReference>
<dbReference type="GO" id="GO:0009380">
    <property type="term" value="C:excinuclease repair complex"/>
    <property type="evidence" value="ECO:0007669"/>
    <property type="project" value="InterPro"/>
</dbReference>
<dbReference type="GO" id="GO:0005524">
    <property type="term" value="F:ATP binding"/>
    <property type="evidence" value="ECO:0007669"/>
    <property type="project" value="UniProtKB-UniRule"/>
</dbReference>
<dbReference type="GO" id="GO:0016887">
    <property type="term" value="F:ATP hydrolysis activity"/>
    <property type="evidence" value="ECO:0007669"/>
    <property type="project" value="InterPro"/>
</dbReference>
<dbReference type="GO" id="GO:0003677">
    <property type="term" value="F:DNA binding"/>
    <property type="evidence" value="ECO:0007669"/>
    <property type="project" value="UniProtKB-UniRule"/>
</dbReference>
<dbReference type="GO" id="GO:0009381">
    <property type="term" value="F:excinuclease ABC activity"/>
    <property type="evidence" value="ECO:0007669"/>
    <property type="project" value="UniProtKB-UniRule"/>
</dbReference>
<dbReference type="GO" id="GO:0006289">
    <property type="term" value="P:nucleotide-excision repair"/>
    <property type="evidence" value="ECO:0007669"/>
    <property type="project" value="UniProtKB-UniRule"/>
</dbReference>
<dbReference type="GO" id="GO:0009432">
    <property type="term" value="P:SOS response"/>
    <property type="evidence" value="ECO:0007669"/>
    <property type="project" value="UniProtKB-UniRule"/>
</dbReference>
<dbReference type="CDD" id="cd17916">
    <property type="entry name" value="DEXHc_UvrB"/>
    <property type="match status" value="1"/>
</dbReference>
<dbReference type="CDD" id="cd18790">
    <property type="entry name" value="SF2_C_UvrB"/>
    <property type="match status" value="1"/>
</dbReference>
<dbReference type="Gene3D" id="3.40.50.300">
    <property type="entry name" value="P-loop containing nucleotide triphosphate hydrolases"/>
    <property type="match status" value="3"/>
</dbReference>
<dbReference type="Gene3D" id="4.10.860.10">
    <property type="entry name" value="UVR domain"/>
    <property type="match status" value="1"/>
</dbReference>
<dbReference type="HAMAP" id="MF_00204">
    <property type="entry name" value="UvrB"/>
    <property type="match status" value="1"/>
</dbReference>
<dbReference type="InterPro" id="IPR006935">
    <property type="entry name" value="Helicase/UvrB_N"/>
</dbReference>
<dbReference type="InterPro" id="IPR014001">
    <property type="entry name" value="Helicase_ATP-bd"/>
</dbReference>
<dbReference type="InterPro" id="IPR001650">
    <property type="entry name" value="Helicase_C-like"/>
</dbReference>
<dbReference type="InterPro" id="IPR027417">
    <property type="entry name" value="P-loop_NTPase"/>
</dbReference>
<dbReference type="InterPro" id="IPR001943">
    <property type="entry name" value="UVR_dom"/>
</dbReference>
<dbReference type="InterPro" id="IPR036876">
    <property type="entry name" value="UVR_dom_sf"/>
</dbReference>
<dbReference type="InterPro" id="IPR004807">
    <property type="entry name" value="UvrB"/>
</dbReference>
<dbReference type="InterPro" id="IPR041471">
    <property type="entry name" value="UvrB_inter"/>
</dbReference>
<dbReference type="InterPro" id="IPR024759">
    <property type="entry name" value="UvrB_YAD/RRR_dom"/>
</dbReference>
<dbReference type="NCBIfam" id="NF003673">
    <property type="entry name" value="PRK05298.1"/>
    <property type="match status" value="1"/>
</dbReference>
<dbReference type="NCBIfam" id="TIGR00631">
    <property type="entry name" value="uvrb"/>
    <property type="match status" value="1"/>
</dbReference>
<dbReference type="PANTHER" id="PTHR24029">
    <property type="entry name" value="UVRABC SYSTEM PROTEIN B"/>
    <property type="match status" value="1"/>
</dbReference>
<dbReference type="PANTHER" id="PTHR24029:SF0">
    <property type="entry name" value="UVRABC SYSTEM PROTEIN B"/>
    <property type="match status" value="1"/>
</dbReference>
<dbReference type="Pfam" id="PF00271">
    <property type="entry name" value="Helicase_C"/>
    <property type="match status" value="1"/>
</dbReference>
<dbReference type="Pfam" id="PF04851">
    <property type="entry name" value="ResIII"/>
    <property type="match status" value="1"/>
</dbReference>
<dbReference type="Pfam" id="PF02151">
    <property type="entry name" value="UVR"/>
    <property type="match status" value="1"/>
</dbReference>
<dbReference type="Pfam" id="PF12344">
    <property type="entry name" value="UvrB"/>
    <property type="match status" value="1"/>
</dbReference>
<dbReference type="Pfam" id="PF17757">
    <property type="entry name" value="UvrB_inter"/>
    <property type="match status" value="1"/>
</dbReference>
<dbReference type="SMART" id="SM00487">
    <property type="entry name" value="DEXDc"/>
    <property type="match status" value="1"/>
</dbReference>
<dbReference type="SMART" id="SM00490">
    <property type="entry name" value="HELICc"/>
    <property type="match status" value="1"/>
</dbReference>
<dbReference type="SUPFAM" id="SSF46600">
    <property type="entry name" value="C-terminal UvrC-binding domain of UvrB"/>
    <property type="match status" value="1"/>
</dbReference>
<dbReference type="SUPFAM" id="SSF52540">
    <property type="entry name" value="P-loop containing nucleoside triphosphate hydrolases"/>
    <property type="match status" value="2"/>
</dbReference>
<dbReference type="PROSITE" id="PS51192">
    <property type="entry name" value="HELICASE_ATP_BIND_1"/>
    <property type="match status" value="1"/>
</dbReference>
<dbReference type="PROSITE" id="PS51194">
    <property type="entry name" value="HELICASE_CTER"/>
    <property type="match status" value="1"/>
</dbReference>
<dbReference type="PROSITE" id="PS50151">
    <property type="entry name" value="UVR"/>
    <property type="match status" value="1"/>
</dbReference>
<comment type="function">
    <text evidence="1">The UvrABC repair system catalyzes the recognition and processing of DNA lesions. A damage recognition complex composed of 2 UvrA and 2 UvrB subunits scans DNA for abnormalities. Upon binding of the UvrA(2)B(2) complex to a putative damaged site, the DNA wraps around one UvrB monomer. DNA wrap is dependent on ATP binding by UvrB and probably causes local melting of the DNA helix, facilitating insertion of UvrB beta-hairpin between the DNA strands. Then UvrB probes one DNA strand for the presence of a lesion. If a lesion is found the UvrA subunits dissociate and the UvrB-DNA preincision complex is formed. This complex is subsequently bound by UvrC and the second UvrB is released. If no lesion is found, the DNA wraps around the other UvrB subunit that will check the other stand for damage.</text>
</comment>
<comment type="subunit">
    <text evidence="1">Forms a heterotetramer with UvrA during the search for lesions. Interacts with UvrC in an incision complex.</text>
</comment>
<comment type="subcellular location">
    <subcellularLocation>
        <location evidence="1">Cytoplasm</location>
    </subcellularLocation>
</comment>
<comment type="domain">
    <text evidence="1">The beta-hairpin motif is involved in DNA binding.</text>
</comment>
<comment type="similarity">
    <text evidence="1">Belongs to the UvrB family.</text>
</comment>
<name>UVRB_STAES</name>
<keyword id="KW-0067">ATP-binding</keyword>
<keyword id="KW-0963">Cytoplasm</keyword>
<keyword id="KW-0227">DNA damage</keyword>
<keyword id="KW-0228">DNA excision</keyword>
<keyword id="KW-0234">DNA repair</keyword>
<keyword id="KW-0267">Excision nuclease</keyword>
<keyword id="KW-0547">Nucleotide-binding</keyword>
<keyword id="KW-0742">SOS response</keyword>
<gene>
    <name evidence="1" type="primary">uvrB</name>
    <name type="ordered locus">SE_0541</name>
</gene>
<proteinExistence type="inferred from homology"/>